<keyword id="KW-0217">Developmental protein</keyword>
<keyword id="KW-0238">DNA-binding</keyword>
<keyword id="KW-0371">Homeobox</keyword>
<keyword id="KW-1017">Isopeptide bond</keyword>
<keyword id="KW-0539">Nucleus</keyword>
<keyword id="KW-1185">Reference proteome</keyword>
<keyword id="KW-0678">Repressor</keyword>
<keyword id="KW-0804">Transcription</keyword>
<keyword id="KW-0805">Transcription regulation</keyword>
<keyword id="KW-0832">Ubl conjugation</keyword>
<dbReference type="EMBL" id="DQ067491">
    <property type="protein sequence ID" value="AAZ30475.1"/>
    <property type="molecule type" value="Genomic_DNA"/>
</dbReference>
<dbReference type="EMBL" id="DQ067490">
    <property type="protein sequence ID" value="AAZ30475.1"/>
    <property type="status" value="JOINED"/>
    <property type="molecule type" value="Genomic_DNA"/>
</dbReference>
<dbReference type="SMR" id="Q2VL76"/>
<dbReference type="STRING" id="379532.ENSPCOP00000029785"/>
<dbReference type="Proteomes" id="UP000233160">
    <property type="component" value="Unassembled WGS sequence"/>
</dbReference>
<dbReference type="GO" id="GO:0034399">
    <property type="term" value="C:nuclear periphery"/>
    <property type="evidence" value="ECO:0000250"/>
    <property type="project" value="UniProtKB"/>
</dbReference>
<dbReference type="GO" id="GO:0000981">
    <property type="term" value="F:DNA-binding transcription factor activity, RNA polymerase II-specific"/>
    <property type="evidence" value="ECO:0007669"/>
    <property type="project" value="InterPro"/>
</dbReference>
<dbReference type="GO" id="GO:0000977">
    <property type="term" value="F:RNA polymerase II transcription regulatory region sequence-specific DNA binding"/>
    <property type="evidence" value="ECO:0007669"/>
    <property type="project" value="TreeGrafter"/>
</dbReference>
<dbReference type="GO" id="GO:0000976">
    <property type="term" value="F:transcription cis-regulatory region binding"/>
    <property type="evidence" value="ECO:0000250"/>
    <property type="project" value="UniProtKB"/>
</dbReference>
<dbReference type="GO" id="GO:0048598">
    <property type="term" value="P:embryonic morphogenesis"/>
    <property type="evidence" value="ECO:0007669"/>
    <property type="project" value="TreeGrafter"/>
</dbReference>
<dbReference type="GO" id="GO:0048839">
    <property type="term" value="P:inner ear development"/>
    <property type="evidence" value="ECO:0000250"/>
    <property type="project" value="UniProtKB"/>
</dbReference>
<dbReference type="GO" id="GO:0010629">
    <property type="term" value="P:negative regulation of gene expression"/>
    <property type="evidence" value="ECO:0000250"/>
    <property type="project" value="UniProtKB"/>
</dbReference>
<dbReference type="GO" id="GO:1901330">
    <property type="term" value="P:negative regulation of odontoblast differentiation"/>
    <property type="evidence" value="ECO:0000250"/>
    <property type="project" value="UniProtKB"/>
</dbReference>
<dbReference type="GO" id="GO:0043584">
    <property type="term" value="P:nose development"/>
    <property type="evidence" value="ECO:0000250"/>
    <property type="project" value="UniProtKB"/>
</dbReference>
<dbReference type="GO" id="GO:0045787">
    <property type="term" value="P:positive regulation of cell cycle"/>
    <property type="evidence" value="ECO:0000250"/>
    <property type="project" value="UniProtKB"/>
</dbReference>
<dbReference type="GO" id="GO:0042482">
    <property type="term" value="P:positive regulation of odontogenesis"/>
    <property type="evidence" value="ECO:0000250"/>
    <property type="project" value="UniProtKB"/>
</dbReference>
<dbReference type="GO" id="GO:0042481">
    <property type="term" value="P:regulation of odontogenesis"/>
    <property type="evidence" value="ECO:0000250"/>
    <property type="project" value="UniProtKB"/>
</dbReference>
<dbReference type="GO" id="GO:0060021">
    <property type="term" value="P:roof of mouth development"/>
    <property type="evidence" value="ECO:0000250"/>
    <property type="project" value="UniProtKB"/>
</dbReference>
<dbReference type="CDD" id="cd00086">
    <property type="entry name" value="homeodomain"/>
    <property type="match status" value="1"/>
</dbReference>
<dbReference type="FunFam" id="1.10.10.60:FF:000134">
    <property type="entry name" value="Homeobox protein MSX-1"/>
    <property type="match status" value="1"/>
</dbReference>
<dbReference type="Gene3D" id="1.10.10.60">
    <property type="entry name" value="Homeodomain-like"/>
    <property type="match status" value="1"/>
</dbReference>
<dbReference type="InterPro" id="IPR001356">
    <property type="entry name" value="HD"/>
</dbReference>
<dbReference type="InterPro" id="IPR020479">
    <property type="entry name" value="HD_metazoa"/>
</dbReference>
<dbReference type="InterPro" id="IPR017970">
    <property type="entry name" value="Homeobox_CS"/>
</dbReference>
<dbReference type="InterPro" id="IPR009057">
    <property type="entry name" value="Homeodomain-like_sf"/>
</dbReference>
<dbReference type="InterPro" id="IPR050674">
    <property type="entry name" value="Msh_Homeobox_Regulators"/>
</dbReference>
<dbReference type="PANTHER" id="PTHR24338">
    <property type="entry name" value="HOMEOBOX PROTEIN MSX"/>
    <property type="match status" value="1"/>
</dbReference>
<dbReference type="PANTHER" id="PTHR24338:SF8">
    <property type="entry name" value="HOMEOBOX PROTEIN MSX-1"/>
    <property type="match status" value="1"/>
</dbReference>
<dbReference type="Pfam" id="PF00046">
    <property type="entry name" value="Homeodomain"/>
    <property type="match status" value="1"/>
</dbReference>
<dbReference type="PRINTS" id="PR00024">
    <property type="entry name" value="HOMEOBOX"/>
</dbReference>
<dbReference type="SMART" id="SM00389">
    <property type="entry name" value="HOX"/>
    <property type="match status" value="1"/>
</dbReference>
<dbReference type="SUPFAM" id="SSF46689">
    <property type="entry name" value="Homeodomain-like"/>
    <property type="match status" value="1"/>
</dbReference>
<dbReference type="PROSITE" id="PS00027">
    <property type="entry name" value="HOMEOBOX_1"/>
    <property type="match status" value="1"/>
</dbReference>
<dbReference type="PROSITE" id="PS50071">
    <property type="entry name" value="HOMEOBOX_2"/>
    <property type="match status" value="1"/>
</dbReference>
<name>MSX1_PROCO</name>
<sequence>MTSLPLGVKVEDSAFGKSAGGGAGQASSAAAATAATMGADEEGAKPKVSPSLLPFSVEALMADHRKPGAKESVLAASEGAQAAGGSAQPLGVRPGSLGAPDAPSSPRPLGHFSVGGLLKLPEDALIKAESPEKPERTPWMQSPRFSPPPARRLSPPACTLRKHKTNRKPRTPFTTAQLLALERKFRQKQYLSIAERAEFSSSLSLTETQVKIWFQNRRAKAKRLQEAELEKLKMAAKPMLPPAAFGLSFPLGGPAAVAAAAGASLYGASGPFQRAALPVAPVGLYTAHVGYSMYHLT</sequence>
<accession>Q2VL76</accession>
<evidence type="ECO:0000250" key="1">
    <source>
        <dbReference type="UniProtKB" id="P13297"/>
    </source>
</evidence>
<evidence type="ECO:0000250" key="2">
    <source>
        <dbReference type="UniProtKB" id="P28360"/>
    </source>
</evidence>
<evidence type="ECO:0000255" key="3">
    <source>
        <dbReference type="PROSITE-ProRule" id="PRU00108"/>
    </source>
</evidence>
<evidence type="ECO:0000256" key="4">
    <source>
        <dbReference type="SAM" id="MobiDB-lite"/>
    </source>
</evidence>
<evidence type="ECO:0000305" key="5"/>
<reference key="1">
    <citation type="journal article" date="2006" name="Mol. Biol. Evol.">
        <title>Molecular evolution of the primate developmental genes MSX1 and PAX9.</title>
        <authorList>
            <person name="Perry G.H."/>
            <person name="Verrelli B.C."/>
            <person name="Stone A.C."/>
        </authorList>
    </citation>
    <scope>NUCLEOTIDE SEQUENCE [GENOMIC DNA]</scope>
    <source>
        <strain>Isolate 6667</strain>
    </source>
</reference>
<feature type="chain" id="PRO_0000049094" description="Homeobox protein MSX-1">
    <location>
        <begin position="1" status="less than"/>
        <end position="297"/>
    </location>
</feature>
<feature type="DNA-binding region" description="Homeobox" evidence="3">
    <location>
        <begin position="166"/>
        <end position="225"/>
    </location>
</feature>
<feature type="region of interest" description="Disordered" evidence="4">
    <location>
        <begin position="13"/>
        <end position="50"/>
    </location>
</feature>
<feature type="region of interest" description="Disordered" evidence="4">
    <location>
        <begin position="77"/>
        <end position="107"/>
    </location>
</feature>
<feature type="region of interest" description="Disordered" evidence="4">
    <location>
        <begin position="129"/>
        <end position="169"/>
    </location>
</feature>
<feature type="compositionally biased region" description="Low complexity" evidence="4">
    <location>
        <begin position="25"/>
        <end position="38"/>
    </location>
</feature>
<feature type="compositionally biased region" description="Low complexity" evidence="4">
    <location>
        <begin position="77"/>
        <end position="88"/>
    </location>
</feature>
<feature type="compositionally biased region" description="Basic residues" evidence="4">
    <location>
        <begin position="160"/>
        <end position="169"/>
    </location>
</feature>
<feature type="cross-link" description="Glycyl lysine isopeptide (Lys-Gly) (interchain with G-Cter in SUMO)" evidence="1">
    <location>
        <position position="9"/>
    </location>
</feature>
<feature type="cross-link" description="Glycyl lysine isopeptide (Lys-Gly) (interchain with G-Cter in SUMO)" evidence="1">
    <location>
        <position position="127"/>
    </location>
</feature>
<feature type="non-terminal residue">
    <location>
        <position position="1"/>
    </location>
</feature>
<proteinExistence type="inferred from homology"/>
<organism>
    <name type="scientific">Propithecus coquereli</name>
    <name type="common">Coquerel's sifaka</name>
    <name type="synonym">Propithecus verreauxi coquereli</name>
    <dbReference type="NCBI Taxonomy" id="379532"/>
    <lineage>
        <taxon>Eukaryota</taxon>
        <taxon>Metazoa</taxon>
        <taxon>Chordata</taxon>
        <taxon>Craniata</taxon>
        <taxon>Vertebrata</taxon>
        <taxon>Euteleostomi</taxon>
        <taxon>Mammalia</taxon>
        <taxon>Eutheria</taxon>
        <taxon>Euarchontoglires</taxon>
        <taxon>Primates</taxon>
        <taxon>Strepsirrhini</taxon>
        <taxon>Lemuriformes</taxon>
        <taxon>Indriidae</taxon>
        <taxon>Propithecus</taxon>
    </lineage>
</organism>
<protein>
    <recommendedName>
        <fullName evidence="5">Homeobox protein MSX-1</fullName>
    </recommendedName>
    <alternativeName>
        <fullName>Msh homeobox 1-like protein</fullName>
    </alternativeName>
</protein>
<comment type="function">
    <text evidence="1 2">Acts as a transcriptional repressor (By similarity). Capable of transcription autoinactivation (By similarity). Binds to the consensus sequence 5'-C/GTAAT-3' in downstream activin regulatory elements (DARE) in the gene promoter, thereby repressing the transcription of CGA/alpha-GSU and GNRHR (By similarity). Represses transcription of myoblast differentiation factors (By similarity). Binds to core enhancer regions in target gene promoters of myoblast differentiation factors with binding specificity facilitated by interaction with PIAS1 (By similarity). Regulates, in a stage-specific manner, a developmental program of gene expression in the fetal tooth bud that controls odontoblast differentiation and proliferation of dental mesenchymal cells (By similarity). At the bud stage, required for mesenchymal molar tooth bud development via facilitating reciprocal signaling between dental epithelial and mesenchymal cells (By similarity). May also regulate expression of Wnt antagonists such as DKK2 and SFPR2 in the developing tooth mesenchyme (By similarity). Required for BMP4 expression in dental mesenchyme cells (By similarity). Also, in response to BMP4, required for BMP4 expression in neighboring dental epithelial cells (By similarity). Required for maximal FGF4-induced expression of SDC1 in dental mesenchyme cells (By similarity). Also in response to SDC1, required for SDC1 expression in neighboring dental epithelial cells (By similarity). At the early bell stage, acts to drive proliferation of dental mesenchyme cells, however during the late bell stage acts as an homeostatic regulator of the cell cycle (By similarity). Regulates proliferation and inhibits premature mesenchymal odontogenesis during the bell stage via inhibition of the Wnt signaling component CTNNB1 and subsequent repression of the odontoblast differentiation factors BMP2, BMP4, LEF1, ALPL and BGLAP/OCN (By similarity). Additionally, required for correct development and fusion of the palatal shelves and embryonic mandibular formation (By similarity). Plays a role in embryonic bone formation of the middle ear, skull and nasal bones (By similarity). Required for correct formation and thickness of the nail plate (By similarity). May play a role in limb-pattern formation (By similarity).</text>
</comment>
<comment type="subunit">
    <text evidence="1">Interacts with CREBBP/CBP, TBP and SP1; interaction with these transcription activators may inhibit autoinactivation (By similarity). Interacts (via C-terminus) with PIAS1 (via N-terminus); the interaction is required for the localization of both proteins to the nuclear periphery and specific binding of MSX1 to the core enhancer region in target gene promoters (By similarity). Interacts with H1-5 (By similarity).</text>
</comment>
<comment type="subcellular location">
    <subcellularLocation>
        <location evidence="1">Nucleus</location>
    </subcellularLocation>
    <text evidence="1">Interaction with PIAS1 is required for localization to the nuclear periphery (By similarity).</text>
</comment>
<comment type="PTM">
    <text evidence="1">Sumoylated by PIAS1, desumoylated by SENP1 (By similarity). Sumoylation of Lys-9 and Lys-127 not required for interaction with H1-5, transcriptional repression, inhibition of myoblast differentiation, or binding to gene promoters (By similarity).</text>
</comment>
<comment type="similarity">
    <text evidence="5">Belongs to the Msh homeobox family.</text>
</comment>
<gene>
    <name evidence="1" type="primary">MSX1</name>
</gene>